<sequence>MNFSPLPNRVIDAPKHLKTRMIQVRSSYFGYSLVIRPTSIFVGAPRAQSTLESQGSINETGAVYRCPLASGSCSHYVLNDKLNKQFQWLGGSMDGGTKDTDKLLVCAPRFFVPKNKNYGQMRGICYWVRDTVADTPPLSDVRTISLIPSQAEEHFMLELGLSAHVTDDNSGFLIGAPGVRSWKGSVLVHRGEDLAAQGSYAVKMLDSWDWVKNHFTYVGYALSSGYFSSNNRTSLLYVTTAPSSVLNTGKAYIFDVVGEIVRKLHVFHGEQLGEYFGYSVVAEDLNGDGLTDVVVSAPLNALGDSYDVGAIYVFINKGLFKFEKKIIRLPLSSGARFGSSLSKVGDINHDGYNDLAVGAPFAGNGAVFIFLGSEHGLRDEPSQRLDAPSREPGPYGAHMFGQGLSRGSDIDGNGFNDLAIGAPGAEAVYLYRAYPVVKIHATVRSESRAIRPEQETITVTACYRLETTSKARQMQQQELTFRMTIDELLQRVSFAPMRTNEVSFQAQAGLSGSCRNFSVGVHYTGGIFTPIDLELHYELAKKIPHSHEAFCESCAVVDPLEPKYATGTLSFMTGCAAHVCVSDLQLSSKDVNSSFIFGSLEVLSFSYEITNSGEPAYVAQFNVTSSARLPFAKVPGNCRVRHEVMLCDLNGGRALARGDSESLTIIFDVTQLSGQSLTIEAAVSSAGMDQNPKDNTMSTTISLREYAEIDASGGPIDGHIALKEYPYSAEVNNSYEFKSHGPSIIDELTVYVDVPIAYTVTGSAGIKSIFNISSLQMQATHGSELVPIKLYDQTNTLAKEYPLEDSSRRANRKRRELQQDQYAIMPDVNISDILTKENLPANRTLVLDCLRGNWTICVRSQMRVQLKPEQPIDLRISFKVDLNDFVNTFDYLVIFTNVEMFKEGDSTSIALKRNLKPNVIFNYSETPLPIWYIILSLIAGHLLLGAMTYILYKLRFFKRGKKEELKRLLEEHRSETKEPATDCEGNQEEINVEMHSDLEN</sequence>
<reference key="1">
    <citation type="journal article" date="2000" name="Science">
        <title>The genome sequence of Drosophila melanogaster.</title>
        <authorList>
            <person name="Adams M.D."/>
            <person name="Celniker S.E."/>
            <person name="Holt R.A."/>
            <person name="Evans C.A."/>
            <person name="Gocayne J.D."/>
            <person name="Amanatides P.G."/>
            <person name="Scherer S.E."/>
            <person name="Li P.W."/>
            <person name="Hoskins R.A."/>
            <person name="Galle R.F."/>
            <person name="George R.A."/>
            <person name="Lewis S.E."/>
            <person name="Richards S."/>
            <person name="Ashburner M."/>
            <person name="Henderson S.N."/>
            <person name="Sutton G.G."/>
            <person name="Wortman J.R."/>
            <person name="Yandell M.D."/>
            <person name="Zhang Q."/>
            <person name="Chen L.X."/>
            <person name="Brandon R.C."/>
            <person name="Rogers Y.-H.C."/>
            <person name="Blazej R.G."/>
            <person name="Champe M."/>
            <person name="Pfeiffer B.D."/>
            <person name="Wan K.H."/>
            <person name="Doyle C."/>
            <person name="Baxter E.G."/>
            <person name="Helt G."/>
            <person name="Nelson C.R."/>
            <person name="Miklos G.L.G."/>
            <person name="Abril J.F."/>
            <person name="Agbayani A."/>
            <person name="An H.-J."/>
            <person name="Andrews-Pfannkoch C."/>
            <person name="Baldwin D."/>
            <person name="Ballew R.M."/>
            <person name="Basu A."/>
            <person name="Baxendale J."/>
            <person name="Bayraktaroglu L."/>
            <person name="Beasley E.M."/>
            <person name="Beeson K.Y."/>
            <person name="Benos P.V."/>
            <person name="Berman B.P."/>
            <person name="Bhandari D."/>
            <person name="Bolshakov S."/>
            <person name="Borkova D."/>
            <person name="Botchan M.R."/>
            <person name="Bouck J."/>
            <person name="Brokstein P."/>
            <person name="Brottier P."/>
            <person name="Burtis K.C."/>
            <person name="Busam D.A."/>
            <person name="Butler H."/>
            <person name="Cadieu E."/>
            <person name="Center A."/>
            <person name="Chandra I."/>
            <person name="Cherry J.M."/>
            <person name="Cawley S."/>
            <person name="Dahlke C."/>
            <person name="Davenport L.B."/>
            <person name="Davies P."/>
            <person name="de Pablos B."/>
            <person name="Delcher A."/>
            <person name="Deng Z."/>
            <person name="Mays A.D."/>
            <person name="Dew I."/>
            <person name="Dietz S.M."/>
            <person name="Dodson K."/>
            <person name="Doup L.E."/>
            <person name="Downes M."/>
            <person name="Dugan-Rocha S."/>
            <person name="Dunkov B.C."/>
            <person name="Dunn P."/>
            <person name="Durbin K.J."/>
            <person name="Evangelista C.C."/>
            <person name="Ferraz C."/>
            <person name="Ferriera S."/>
            <person name="Fleischmann W."/>
            <person name="Fosler C."/>
            <person name="Gabrielian A.E."/>
            <person name="Garg N.S."/>
            <person name="Gelbart W.M."/>
            <person name="Glasser K."/>
            <person name="Glodek A."/>
            <person name="Gong F."/>
            <person name="Gorrell J.H."/>
            <person name="Gu Z."/>
            <person name="Guan P."/>
            <person name="Harris M."/>
            <person name="Harris N.L."/>
            <person name="Harvey D.A."/>
            <person name="Heiman T.J."/>
            <person name="Hernandez J.R."/>
            <person name="Houck J."/>
            <person name="Hostin D."/>
            <person name="Houston K.A."/>
            <person name="Howland T.J."/>
            <person name="Wei M.-H."/>
            <person name="Ibegwam C."/>
            <person name="Jalali M."/>
            <person name="Kalush F."/>
            <person name="Karpen G.H."/>
            <person name="Ke Z."/>
            <person name="Kennison J.A."/>
            <person name="Ketchum K.A."/>
            <person name="Kimmel B.E."/>
            <person name="Kodira C.D."/>
            <person name="Kraft C.L."/>
            <person name="Kravitz S."/>
            <person name="Kulp D."/>
            <person name="Lai Z."/>
            <person name="Lasko P."/>
            <person name="Lei Y."/>
            <person name="Levitsky A.A."/>
            <person name="Li J.H."/>
            <person name="Li Z."/>
            <person name="Liang Y."/>
            <person name="Lin X."/>
            <person name="Liu X."/>
            <person name="Mattei B."/>
            <person name="McIntosh T.C."/>
            <person name="McLeod M.P."/>
            <person name="McPherson D."/>
            <person name="Merkulov G."/>
            <person name="Milshina N.V."/>
            <person name="Mobarry C."/>
            <person name="Morris J."/>
            <person name="Moshrefi A."/>
            <person name="Mount S.M."/>
            <person name="Moy M."/>
            <person name="Murphy B."/>
            <person name="Murphy L."/>
            <person name="Muzny D.M."/>
            <person name="Nelson D.L."/>
            <person name="Nelson D.R."/>
            <person name="Nelson K.A."/>
            <person name="Nixon K."/>
            <person name="Nusskern D.R."/>
            <person name="Pacleb J.M."/>
            <person name="Palazzolo M."/>
            <person name="Pittman G.S."/>
            <person name="Pan S."/>
            <person name="Pollard J."/>
            <person name="Puri V."/>
            <person name="Reese M.G."/>
            <person name="Reinert K."/>
            <person name="Remington K."/>
            <person name="Saunders R.D.C."/>
            <person name="Scheeler F."/>
            <person name="Shen H."/>
            <person name="Shue B.C."/>
            <person name="Siden-Kiamos I."/>
            <person name="Simpson M."/>
            <person name="Skupski M.P."/>
            <person name="Smith T.J."/>
            <person name="Spier E."/>
            <person name="Spradling A.C."/>
            <person name="Stapleton M."/>
            <person name="Strong R."/>
            <person name="Sun E."/>
            <person name="Svirskas R."/>
            <person name="Tector C."/>
            <person name="Turner R."/>
            <person name="Venter E."/>
            <person name="Wang A.H."/>
            <person name="Wang X."/>
            <person name="Wang Z.-Y."/>
            <person name="Wassarman D.A."/>
            <person name="Weinstock G.M."/>
            <person name="Weissenbach J."/>
            <person name="Williams S.M."/>
            <person name="Woodage T."/>
            <person name="Worley K.C."/>
            <person name="Wu D."/>
            <person name="Yang S."/>
            <person name="Yao Q.A."/>
            <person name="Ye J."/>
            <person name="Yeh R.-F."/>
            <person name="Zaveri J.S."/>
            <person name="Zhan M."/>
            <person name="Zhang G."/>
            <person name="Zhao Q."/>
            <person name="Zheng L."/>
            <person name="Zheng X.H."/>
            <person name="Zhong F.N."/>
            <person name="Zhong W."/>
            <person name="Zhou X."/>
            <person name="Zhu S.C."/>
            <person name="Zhu X."/>
            <person name="Smith H.O."/>
            <person name="Gibbs R.A."/>
            <person name="Myers E.W."/>
            <person name="Rubin G.M."/>
            <person name="Venter J.C."/>
        </authorList>
    </citation>
    <scope>NUCLEOTIDE SEQUENCE [LARGE SCALE GENOMIC DNA]</scope>
    <source>
        <strain>Berkeley</strain>
    </source>
</reference>
<reference key="2">
    <citation type="journal article" date="2002" name="Genome Biol.">
        <title>Annotation of the Drosophila melanogaster euchromatic genome: a systematic review.</title>
        <authorList>
            <person name="Misra S."/>
            <person name="Crosby M.A."/>
            <person name="Mungall C.J."/>
            <person name="Matthews B.B."/>
            <person name="Campbell K.S."/>
            <person name="Hradecky P."/>
            <person name="Huang Y."/>
            <person name="Kaminker J.S."/>
            <person name="Millburn G.H."/>
            <person name="Prochnik S.E."/>
            <person name="Smith C.D."/>
            <person name="Tupy J.L."/>
            <person name="Whitfield E.J."/>
            <person name="Bayraktaroglu L."/>
            <person name="Berman B.P."/>
            <person name="Bettencourt B.R."/>
            <person name="Celniker S.E."/>
            <person name="de Grey A.D.N.J."/>
            <person name="Drysdale R.A."/>
            <person name="Harris N.L."/>
            <person name="Richter J."/>
            <person name="Russo S."/>
            <person name="Schroeder A.J."/>
            <person name="Shu S.Q."/>
            <person name="Stapleton M."/>
            <person name="Yamada C."/>
            <person name="Ashburner M."/>
            <person name="Gelbart W.M."/>
            <person name="Rubin G.M."/>
            <person name="Lewis S.E."/>
        </authorList>
    </citation>
    <scope>GENOME REANNOTATION</scope>
    <source>
        <strain>Berkeley</strain>
    </source>
</reference>
<reference key="3">
    <citation type="journal article" date="2008" name="Dev. Dyn.">
        <title>Integrin alpha chains exhibit distinct temporal and spatial localization patterns in epithelial cells of the Drosophila ovary.</title>
        <authorList>
            <person name="Dinkins M.B."/>
            <person name="Fratto V.M."/>
            <person name="Lemosy E.K."/>
        </authorList>
    </citation>
    <scope>TISSUE SPECIFICITY</scope>
    <scope>DEVELOPMENTAL STAGE</scope>
</reference>
<reference key="4">
    <citation type="journal article" date="2010" name="PLoS ONE">
        <title>Lineage tracing of lamellocytes demonstrates Drosophila macrophage plasticity.</title>
        <authorList>
            <person name="Stofanko M."/>
            <person name="Kwon S.Y."/>
            <person name="Badenhorst P."/>
        </authorList>
    </citation>
    <scope>TISSUE SPECIFICITY</scope>
</reference>
<feature type="signal peptide" evidence="2">
    <location>
        <begin position="1"/>
        <end status="unknown"/>
    </location>
</feature>
<feature type="chain" id="PRO_0000016330" description="Integrin alpha-PS5">
    <location>
        <begin status="unknown"/>
        <end position="1000"/>
    </location>
</feature>
<feature type="topological domain" description="Extracellular" evidence="2">
    <location>
        <begin status="unknown"/>
        <end position="929"/>
    </location>
</feature>
<feature type="transmembrane region" description="Helical" evidence="2">
    <location>
        <begin position="930"/>
        <end position="950"/>
    </location>
</feature>
<feature type="topological domain" description="Cytoplasmic" evidence="2">
    <location>
        <begin position="951"/>
        <end position="1000"/>
    </location>
</feature>
<feature type="repeat" description="FG-GAP 1" evidence="3">
    <location>
        <begin position="15"/>
        <end position="74"/>
    </location>
</feature>
<feature type="repeat" description="FG-GAP 2" evidence="3">
    <location>
        <begin position="75"/>
        <end position="137"/>
    </location>
</feature>
<feature type="repeat" description="FG-GAP 3" evidence="3">
    <location>
        <begin position="145"/>
        <end position="198"/>
    </location>
</feature>
<feature type="repeat" description="FG-GAP 4">
    <location>
        <begin position="199"/>
        <end position="261"/>
    </location>
</feature>
<feature type="repeat" description="FG-GAP 5" evidence="3">
    <location>
        <begin position="262"/>
        <end position="323"/>
    </location>
</feature>
<feature type="repeat" description="FG-GAP 6" evidence="3">
    <location>
        <begin position="324"/>
        <end position="379"/>
    </location>
</feature>
<feature type="repeat" description="FG-GAP 7" evidence="3">
    <location>
        <begin position="386"/>
        <end position="448"/>
    </location>
</feature>
<feature type="region of interest" description="Disordered" evidence="4">
    <location>
        <begin position="971"/>
        <end position="1000"/>
    </location>
</feature>
<feature type="compositionally biased region" description="Basic and acidic residues" evidence="4">
    <location>
        <begin position="971"/>
        <end position="980"/>
    </location>
</feature>
<feature type="glycosylation site" description="N-linked (GlcNAc...) asparagine" evidence="2">
    <location>
        <position position="58"/>
    </location>
</feature>
<feature type="glycosylation site" description="N-linked (GlcNAc...) asparagine" evidence="2">
    <location>
        <position position="231"/>
    </location>
</feature>
<feature type="glycosylation site" description="N-linked (GlcNAc...) asparagine" evidence="2">
    <location>
        <position position="516"/>
    </location>
</feature>
<feature type="glycosylation site" description="N-linked (GlcNAc...) asparagine" evidence="2">
    <location>
        <position position="592"/>
    </location>
</feature>
<feature type="glycosylation site" description="N-linked (GlcNAc...) asparagine" evidence="2">
    <location>
        <position position="622"/>
    </location>
</feature>
<feature type="glycosylation site" description="N-linked (GlcNAc...) asparagine" evidence="2">
    <location>
        <position position="732"/>
    </location>
</feature>
<feature type="glycosylation site" description="N-linked (GlcNAc...) asparagine" evidence="2">
    <location>
        <position position="771"/>
    </location>
</feature>
<feature type="glycosylation site" description="N-linked (GlcNAc...) asparagine" evidence="2">
    <location>
        <position position="829"/>
    </location>
</feature>
<feature type="glycosylation site" description="N-linked (GlcNAc...) asparagine" evidence="2">
    <location>
        <position position="842"/>
    </location>
</feature>
<feature type="glycosylation site" description="N-linked (GlcNAc...) asparagine" evidence="2">
    <location>
        <position position="853"/>
    </location>
</feature>
<feature type="glycosylation site" description="N-linked (GlcNAc...) asparagine" evidence="2">
    <location>
        <position position="922"/>
    </location>
</feature>
<keyword id="KW-0130">Cell adhesion</keyword>
<keyword id="KW-0325">Glycoprotein</keyword>
<keyword id="KW-0401">Integrin</keyword>
<keyword id="KW-0472">Membrane</keyword>
<keyword id="KW-0675">Receptor</keyword>
<keyword id="KW-1185">Reference proteome</keyword>
<keyword id="KW-0677">Repeat</keyword>
<keyword id="KW-0732">Signal</keyword>
<keyword id="KW-0812">Transmembrane</keyword>
<keyword id="KW-1133">Transmembrane helix</keyword>
<evidence type="ECO:0000250" key="1"/>
<evidence type="ECO:0000255" key="2"/>
<evidence type="ECO:0000255" key="3">
    <source>
        <dbReference type="PROSITE-ProRule" id="PRU00803"/>
    </source>
</evidence>
<evidence type="ECO:0000256" key="4">
    <source>
        <dbReference type="SAM" id="MobiDB-lite"/>
    </source>
</evidence>
<evidence type="ECO:0000269" key="5">
    <source>
    </source>
</evidence>
<evidence type="ECO:0000269" key="6">
    <source>
    </source>
</evidence>
<evidence type="ECO:0000305" key="7"/>
<evidence type="ECO:0000312" key="8">
    <source>
        <dbReference type="FlyBase" id="FBgn0034880"/>
    </source>
</evidence>
<accession>Q9W1M8</accession>
<proteinExistence type="evidence at transcript level"/>
<organism>
    <name type="scientific">Drosophila melanogaster</name>
    <name type="common">Fruit fly</name>
    <dbReference type="NCBI Taxonomy" id="7227"/>
    <lineage>
        <taxon>Eukaryota</taxon>
        <taxon>Metazoa</taxon>
        <taxon>Ecdysozoa</taxon>
        <taxon>Arthropoda</taxon>
        <taxon>Hexapoda</taxon>
        <taxon>Insecta</taxon>
        <taxon>Pterygota</taxon>
        <taxon>Neoptera</taxon>
        <taxon>Endopterygota</taxon>
        <taxon>Diptera</taxon>
        <taxon>Brachycera</taxon>
        <taxon>Muscomorpha</taxon>
        <taxon>Ephydroidea</taxon>
        <taxon>Drosophilidae</taxon>
        <taxon>Drosophila</taxon>
        <taxon>Sophophora</taxon>
    </lineage>
</organism>
<comment type="function">
    <text>Possible role in cell-cell interactions. Minor involvement in the establishment of the oocyte anterior-posterior length.</text>
</comment>
<comment type="subunit">
    <text evidence="1">Heterodimer of an alpha and a beta subunit. Alpha-PS5 associates with beta-PS (By similarity).</text>
</comment>
<comment type="subcellular location">
    <subcellularLocation>
        <location>Membrane</location>
        <topology>Single-pass type I membrane protein</topology>
    </subcellularLocation>
</comment>
<comment type="tissue specificity">
    <text evidence="5 6">Expressed in all follicle cells overlying the oocyte during mid-oogenesis, the strongest expression is observed in the cells covering the anterior end of the oocyte and in the cells forming the dorsal appendages. After completion of oocyte enlargement, expression in main body follicle cells is down-regulated but persists strongly in the dorsal appendage forming cells. Expressed in lamellocytes.</text>
</comment>
<comment type="developmental stage">
    <text evidence="5">Expressed during mid- and late-oogenesis.</text>
</comment>
<comment type="similarity">
    <text evidence="7">Belongs to the integrin alpha chain family.</text>
</comment>
<protein>
    <recommendedName>
        <fullName>Integrin alpha-PS5</fullName>
    </recommendedName>
    <alternativeName>
        <fullName>Position-specific antigen subunit alpha-5</fullName>
    </alternativeName>
</protein>
<name>ITA5_DROME</name>
<gene>
    <name evidence="8" type="primary">ItgaPS5</name>
    <name type="synonym">alphaPS5</name>
    <name type="synonym">ItgalphaPS5</name>
    <name evidence="8" type="ORF">CG5372</name>
</gene>
<dbReference type="EMBL" id="AE013599">
    <property type="protein sequence ID" value="AAF47029.1"/>
    <property type="molecule type" value="Genomic_DNA"/>
</dbReference>
<dbReference type="RefSeq" id="NP_611808.1">
    <property type="nucleotide sequence ID" value="NM_137964.2"/>
</dbReference>
<dbReference type="SMR" id="Q9W1M8"/>
<dbReference type="BioGRID" id="63332">
    <property type="interactions" value="3"/>
</dbReference>
<dbReference type="DIP" id="DIP-20602N"/>
<dbReference type="FunCoup" id="Q9W1M8">
    <property type="interactions" value="1"/>
</dbReference>
<dbReference type="IntAct" id="Q9W1M8">
    <property type="interactions" value="2"/>
</dbReference>
<dbReference type="STRING" id="7227.FBpp0423081"/>
<dbReference type="GlyCosmos" id="Q9W1M8">
    <property type="glycosylation" value="11 sites, No reported glycans"/>
</dbReference>
<dbReference type="GlyGen" id="Q9W1M8">
    <property type="glycosylation" value="11 sites"/>
</dbReference>
<dbReference type="PaxDb" id="7227-FBpp0071972"/>
<dbReference type="EnsemblMetazoa" id="FBtr0473618">
    <property type="protein sequence ID" value="FBpp0423081"/>
    <property type="gene ID" value="FBgn0034880"/>
</dbReference>
<dbReference type="GeneID" id="37732"/>
<dbReference type="KEGG" id="dme:Dmel_CG5372"/>
<dbReference type="AGR" id="FB:FBgn0034880"/>
<dbReference type="CTD" id="37732"/>
<dbReference type="FlyBase" id="FBgn0034880">
    <property type="gene designation" value="ItgaPS5"/>
</dbReference>
<dbReference type="VEuPathDB" id="VectorBase:FBgn0034880"/>
<dbReference type="eggNOG" id="KOG3637">
    <property type="taxonomic scope" value="Eukaryota"/>
</dbReference>
<dbReference type="GeneTree" id="ENSGT00940000165133"/>
<dbReference type="HOGENOM" id="CLU_008760_0_0_1"/>
<dbReference type="InParanoid" id="Q9W1M8"/>
<dbReference type="OrthoDB" id="7853647at2759"/>
<dbReference type="PhylomeDB" id="Q9W1M8"/>
<dbReference type="Reactome" id="R-DME-210991">
    <property type="pathway name" value="Basigin interactions"/>
</dbReference>
<dbReference type="Reactome" id="R-DME-216083">
    <property type="pathway name" value="Integrin cell surface interactions"/>
</dbReference>
<dbReference type="Reactome" id="R-DME-3000170">
    <property type="pathway name" value="Syndecan interactions"/>
</dbReference>
<dbReference type="BioGRID-ORCS" id="37732">
    <property type="hits" value="0 hits in 3 CRISPR screens"/>
</dbReference>
<dbReference type="GenomeRNAi" id="37732"/>
<dbReference type="PRO" id="PR:Q9W1M8"/>
<dbReference type="Proteomes" id="UP000000803">
    <property type="component" value="Chromosome 2R"/>
</dbReference>
<dbReference type="Bgee" id="FBgn0034880">
    <property type="expression patterns" value="Expressed in embryonic/larval hemocyte (Drosophila) and 2 other cell types or tissues"/>
</dbReference>
<dbReference type="GO" id="GO:0009897">
    <property type="term" value="C:external side of plasma membrane"/>
    <property type="evidence" value="ECO:0000318"/>
    <property type="project" value="GO_Central"/>
</dbReference>
<dbReference type="GO" id="GO:0008305">
    <property type="term" value="C:integrin complex"/>
    <property type="evidence" value="ECO:0000250"/>
    <property type="project" value="FlyBase"/>
</dbReference>
<dbReference type="GO" id="GO:0016020">
    <property type="term" value="C:membrane"/>
    <property type="evidence" value="ECO:0000250"/>
    <property type="project" value="FlyBase"/>
</dbReference>
<dbReference type="GO" id="GO:0005178">
    <property type="term" value="F:integrin binding"/>
    <property type="evidence" value="ECO:0000318"/>
    <property type="project" value="GO_Central"/>
</dbReference>
<dbReference type="GO" id="GO:0046982">
    <property type="term" value="F:protein heterodimerization activity"/>
    <property type="evidence" value="ECO:0000250"/>
    <property type="project" value="FlyBase"/>
</dbReference>
<dbReference type="GO" id="GO:0033627">
    <property type="term" value="P:cell adhesion mediated by integrin"/>
    <property type="evidence" value="ECO:0000250"/>
    <property type="project" value="FlyBase"/>
</dbReference>
<dbReference type="GO" id="GO:0098609">
    <property type="term" value="P:cell-cell adhesion"/>
    <property type="evidence" value="ECO:0000318"/>
    <property type="project" value="GO_Central"/>
</dbReference>
<dbReference type="GO" id="GO:0007160">
    <property type="term" value="P:cell-matrix adhesion"/>
    <property type="evidence" value="ECO:0000304"/>
    <property type="project" value="FlyBase"/>
</dbReference>
<dbReference type="GO" id="GO:0007157">
    <property type="term" value="P:heterophilic cell-cell adhesion via plasma membrane cell adhesion molecules"/>
    <property type="evidence" value="ECO:0000304"/>
    <property type="project" value="FlyBase"/>
</dbReference>
<dbReference type="GO" id="GO:0007229">
    <property type="term" value="P:integrin-mediated signaling pathway"/>
    <property type="evidence" value="ECO:0000318"/>
    <property type="project" value="GO_Central"/>
</dbReference>
<dbReference type="GO" id="GO:0001555">
    <property type="term" value="P:oocyte growth"/>
    <property type="evidence" value="ECO:0000315"/>
    <property type="project" value="UniProtKB"/>
</dbReference>
<dbReference type="FunFam" id="2.60.40.1460:FF:000014">
    <property type="entry name" value="Integrin alpha-PS3"/>
    <property type="match status" value="1"/>
</dbReference>
<dbReference type="FunFam" id="2.130.10.130:FF:000015">
    <property type="entry name" value="integrin alpha-PS3 isoform X1"/>
    <property type="match status" value="1"/>
</dbReference>
<dbReference type="FunFam" id="1.20.5.930:FF:000005">
    <property type="entry name" value="Integrin, alpha 10"/>
    <property type="match status" value="1"/>
</dbReference>
<dbReference type="Gene3D" id="1.20.5.930">
    <property type="entry name" value="Bicelle-embedded integrin alpha(iib) transmembrane segment"/>
    <property type="match status" value="1"/>
</dbReference>
<dbReference type="Gene3D" id="2.130.10.130">
    <property type="entry name" value="Integrin alpha, N-terminal"/>
    <property type="match status" value="1"/>
</dbReference>
<dbReference type="Gene3D" id="2.60.40.1460">
    <property type="entry name" value="Integrin domains. Chain A, domain 2"/>
    <property type="match status" value="1"/>
</dbReference>
<dbReference type="Gene3D" id="2.60.40.1510">
    <property type="entry name" value="ntegrin, alpha v. Chain A, domain 3"/>
    <property type="match status" value="1"/>
</dbReference>
<dbReference type="InterPro" id="IPR013517">
    <property type="entry name" value="FG-GAP"/>
</dbReference>
<dbReference type="InterPro" id="IPR013519">
    <property type="entry name" value="Int_alpha_beta-p"/>
</dbReference>
<dbReference type="InterPro" id="IPR000413">
    <property type="entry name" value="Integrin_alpha"/>
</dbReference>
<dbReference type="InterPro" id="IPR048285">
    <property type="entry name" value="Integrin_alpha_Ig-like_2"/>
</dbReference>
<dbReference type="InterPro" id="IPR028994">
    <property type="entry name" value="Integrin_alpha_N"/>
</dbReference>
<dbReference type="InterPro" id="IPR032695">
    <property type="entry name" value="Integrin_dom_sf"/>
</dbReference>
<dbReference type="PANTHER" id="PTHR23220">
    <property type="entry name" value="INTEGRIN ALPHA"/>
    <property type="match status" value="1"/>
</dbReference>
<dbReference type="PANTHER" id="PTHR23220:SF83">
    <property type="entry name" value="INTEGRIN ALPHA-PS3-RELATED"/>
    <property type="match status" value="1"/>
</dbReference>
<dbReference type="Pfam" id="PF01839">
    <property type="entry name" value="FG-GAP"/>
    <property type="match status" value="3"/>
</dbReference>
<dbReference type="Pfam" id="PF20805">
    <property type="entry name" value="Integrin_A_Ig_2"/>
    <property type="match status" value="1"/>
</dbReference>
<dbReference type="PRINTS" id="PR01185">
    <property type="entry name" value="INTEGRINA"/>
</dbReference>
<dbReference type="SMART" id="SM00191">
    <property type="entry name" value="Int_alpha"/>
    <property type="match status" value="5"/>
</dbReference>
<dbReference type="SUPFAM" id="SSF69318">
    <property type="entry name" value="Integrin alpha N-terminal domain"/>
    <property type="match status" value="1"/>
</dbReference>
<dbReference type="SUPFAM" id="SSF69179">
    <property type="entry name" value="Integrin domains"/>
    <property type="match status" value="2"/>
</dbReference>
<dbReference type="PROSITE" id="PS51470">
    <property type="entry name" value="FG_GAP"/>
    <property type="match status" value="6"/>
</dbReference>